<evidence type="ECO:0000255" key="1">
    <source>
        <dbReference type="HAMAP-Rule" id="MF_00302"/>
    </source>
</evidence>
<evidence type="ECO:0000256" key="2">
    <source>
        <dbReference type="SAM" id="MobiDB-lite"/>
    </source>
</evidence>
<proteinExistence type="inferred from homology"/>
<organism>
    <name type="scientific">Pseudomonas paraeruginosa (strain DSM 24068 / PA7)</name>
    <name type="common">Pseudomonas aeruginosa (strain PA7)</name>
    <dbReference type="NCBI Taxonomy" id="381754"/>
    <lineage>
        <taxon>Bacteria</taxon>
        <taxon>Pseudomonadati</taxon>
        <taxon>Pseudomonadota</taxon>
        <taxon>Gammaproteobacteria</taxon>
        <taxon>Pseudomonadales</taxon>
        <taxon>Pseudomonadaceae</taxon>
        <taxon>Pseudomonas</taxon>
        <taxon>Pseudomonas paraeruginosa</taxon>
    </lineage>
</organism>
<protein>
    <recommendedName>
        <fullName evidence="1">ATP-dependent Clp protease adapter protein ClpS</fullName>
    </recommendedName>
</protein>
<dbReference type="EMBL" id="CP000744">
    <property type="protein sequence ID" value="ABR84328.1"/>
    <property type="molecule type" value="Genomic_DNA"/>
</dbReference>
<dbReference type="RefSeq" id="WP_003097649.1">
    <property type="nucleotide sequence ID" value="NC_009656.1"/>
</dbReference>
<dbReference type="SMR" id="A6V4G5"/>
<dbReference type="GeneID" id="77220842"/>
<dbReference type="KEGG" id="pap:PSPA7_2586"/>
<dbReference type="HOGENOM" id="CLU_134358_2_0_6"/>
<dbReference type="Proteomes" id="UP000001582">
    <property type="component" value="Chromosome"/>
</dbReference>
<dbReference type="GO" id="GO:0030163">
    <property type="term" value="P:protein catabolic process"/>
    <property type="evidence" value="ECO:0007669"/>
    <property type="project" value="InterPro"/>
</dbReference>
<dbReference type="GO" id="GO:0006508">
    <property type="term" value="P:proteolysis"/>
    <property type="evidence" value="ECO:0007669"/>
    <property type="project" value="UniProtKB-UniRule"/>
</dbReference>
<dbReference type="FunFam" id="3.30.1390.10:FF:000002">
    <property type="entry name" value="ATP-dependent Clp protease adapter protein ClpS"/>
    <property type="match status" value="1"/>
</dbReference>
<dbReference type="Gene3D" id="3.30.1390.10">
    <property type="match status" value="1"/>
</dbReference>
<dbReference type="HAMAP" id="MF_00302">
    <property type="entry name" value="ClpS"/>
    <property type="match status" value="1"/>
</dbReference>
<dbReference type="InterPro" id="IPR022935">
    <property type="entry name" value="ClpS"/>
</dbReference>
<dbReference type="InterPro" id="IPR003769">
    <property type="entry name" value="ClpS_core"/>
</dbReference>
<dbReference type="InterPro" id="IPR014719">
    <property type="entry name" value="Ribosomal_bL12_C/ClpS-like"/>
</dbReference>
<dbReference type="NCBIfam" id="NF000669">
    <property type="entry name" value="PRK00033.1-2"/>
    <property type="match status" value="1"/>
</dbReference>
<dbReference type="NCBIfam" id="NF000670">
    <property type="entry name" value="PRK00033.1-3"/>
    <property type="match status" value="1"/>
</dbReference>
<dbReference type="NCBIfam" id="NF000672">
    <property type="entry name" value="PRK00033.1-5"/>
    <property type="match status" value="1"/>
</dbReference>
<dbReference type="PANTHER" id="PTHR33473:SF19">
    <property type="entry name" value="ATP-DEPENDENT CLP PROTEASE ADAPTER PROTEIN CLPS"/>
    <property type="match status" value="1"/>
</dbReference>
<dbReference type="PANTHER" id="PTHR33473">
    <property type="entry name" value="ATP-DEPENDENT CLP PROTEASE ADAPTER PROTEIN CLPS1, CHLOROPLASTIC"/>
    <property type="match status" value="1"/>
</dbReference>
<dbReference type="Pfam" id="PF02617">
    <property type="entry name" value="ClpS"/>
    <property type="match status" value="1"/>
</dbReference>
<dbReference type="SUPFAM" id="SSF54736">
    <property type="entry name" value="ClpS-like"/>
    <property type="match status" value="1"/>
</dbReference>
<reference key="1">
    <citation type="submission" date="2007-06" db="EMBL/GenBank/DDBJ databases">
        <authorList>
            <person name="Dodson R.J."/>
            <person name="Harkins D."/>
            <person name="Paulsen I.T."/>
        </authorList>
    </citation>
    <scope>NUCLEOTIDE SEQUENCE [LARGE SCALE GENOMIC DNA]</scope>
    <source>
        <strain>DSM 24068 / PA7</strain>
    </source>
</reference>
<comment type="function">
    <text evidence="1">Involved in the modulation of the specificity of the ClpAP-mediated ATP-dependent protein degradation.</text>
</comment>
<comment type="subunit">
    <text evidence="1">Binds to the N-terminal domain of the chaperone ClpA.</text>
</comment>
<comment type="similarity">
    <text evidence="1">Belongs to the ClpS family.</text>
</comment>
<name>CLPS_PSEP7</name>
<accession>A6V4G5</accession>
<sequence length="122" mass="13937">MHAPSQIRLTFNQDHPEPHEHEDEGAGLAVQESKPVLQPPPLYKVVLFNDDYTPMDFVVEVLEVFFNMDREKATKIMLTVHTQGKAVCGLFTRDVAETKAMQVNQYARESQHPLLCEIEKDS</sequence>
<gene>
    <name evidence="1" type="primary">clpS</name>
    <name type="ordered locus">PSPA7_2586</name>
</gene>
<feature type="chain" id="PRO_1000022615" description="ATP-dependent Clp protease adapter protein ClpS">
    <location>
        <begin position="1"/>
        <end position="122"/>
    </location>
</feature>
<feature type="region of interest" description="Disordered" evidence="2">
    <location>
        <begin position="1"/>
        <end position="33"/>
    </location>
</feature>
<feature type="compositionally biased region" description="Basic and acidic residues" evidence="2">
    <location>
        <begin position="14"/>
        <end position="24"/>
    </location>
</feature>